<evidence type="ECO:0000250" key="1">
    <source>
        <dbReference type="UniProtKB" id="P21589"/>
    </source>
</evidence>
<evidence type="ECO:0000250" key="2">
    <source>
        <dbReference type="UniProtKB" id="P50635"/>
    </source>
</evidence>
<evidence type="ECO:0000255" key="3"/>
<evidence type="ECO:0000269" key="4">
    <source>
    </source>
</evidence>
<evidence type="ECO:0000303" key="5">
    <source>
    </source>
</evidence>
<evidence type="ECO:0000305" key="6"/>
<feature type="signal peptide" evidence="3">
    <location>
        <begin position="1"/>
        <end position="21"/>
    </location>
</feature>
<feature type="chain" id="PRO_0000414929" description="Apyrase" evidence="3">
    <location>
        <begin position="22"/>
        <end position="554"/>
    </location>
</feature>
<feature type="binding site" evidence="1">
    <location>
        <position position="43"/>
    </location>
    <ligand>
        <name>a divalent metal cation</name>
        <dbReference type="ChEBI" id="CHEBI:60240"/>
        <label>1</label>
    </ligand>
</feature>
<feature type="binding site" evidence="1">
    <location>
        <position position="45"/>
    </location>
    <ligand>
        <name>a divalent metal cation</name>
        <dbReference type="ChEBI" id="CHEBI:60240"/>
        <label>1</label>
    </ligand>
</feature>
<feature type="binding site" evidence="1">
    <location>
        <position position="92"/>
    </location>
    <ligand>
        <name>a divalent metal cation</name>
        <dbReference type="ChEBI" id="CHEBI:60240"/>
        <label>1</label>
    </ligand>
</feature>
<feature type="binding site" evidence="1">
    <location>
        <position position="92"/>
    </location>
    <ligand>
        <name>a divalent metal cation</name>
        <dbReference type="ChEBI" id="CHEBI:60240"/>
        <label>2</label>
    </ligand>
</feature>
<feature type="binding site" evidence="1">
    <location>
        <position position="124"/>
    </location>
    <ligand>
        <name>a divalent metal cation</name>
        <dbReference type="ChEBI" id="CHEBI:60240"/>
        <label>2</label>
    </ligand>
</feature>
<feature type="binding site" evidence="1">
    <location>
        <position position="224"/>
    </location>
    <ligand>
        <name>a divalent metal cation</name>
        <dbReference type="ChEBI" id="CHEBI:60240"/>
        <label>2</label>
    </ligand>
</feature>
<feature type="binding site" evidence="1">
    <location>
        <position position="248"/>
    </location>
    <ligand>
        <name>a divalent metal cation</name>
        <dbReference type="ChEBI" id="CHEBI:60240"/>
        <label>2</label>
    </ligand>
</feature>
<feature type="binding site" evidence="1">
    <location>
        <position position="358"/>
    </location>
    <ligand>
        <name>AMP</name>
        <dbReference type="ChEBI" id="CHEBI:456215"/>
    </ligand>
</feature>
<feature type="binding site" evidence="1">
    <location>
        <position position="394"/>
    </location>
    <ligand>
        <name>AMP</name>
        <dbReference type="ChEBI" id="CHEBI:456215"/>
    </ligand>
</feature>
<feature type="binding site" evidence="1">
    <location>
        <position position="399"/>
    </location>
    <ligand>
        <name>AMP</name>
        <dbReference type="ChEBI" id="CHEBI:456215"/>
    </ligand>
</feature>
<feature type="binding site" evidence="1">
    <location>
        <position position="418"/>
    </location>
    <ligand>
        <name>AMP</name>
        <dbReference type="ChEBI" id="CHEBI:456215"/>
    </ligand>
</feature>
<feature type="binding site" evidence="1">
    <location>
        <position position="504"/>
    </location>
    <ligand>
        <name>AMP</name>
        <dbReference type="ChEBI" id="CHEBI:456215"/>
    </ligand>
</feature>
<feature type="binding site" evidence="1">
    <location>
        <position position="510"/>
    </location>
    <ligand>
        <name>AMP</name>
        <dbReference type="ChEBI" id="CHEBI:456215"/>
    </ligand>
</feature>
<feature type="site" description="Transition state stabilizer" evidence="1">
    <location>
        <position position="125"/>
    </location>
</feature>
<feature type="site" description="Transition state stabilizer" evidence="1">
    <location>
        <position position="128"/>
    </location>
</feature>
<feature type="sequence conflict" description="In Ref. 1; AA sequence." evidence="4" ref="1">
    <original>N</original>
    <variation>K</variation>
    <location>
        <position position="444"/>
    </location>
</feature>
<sequence length="554" mass="61880">MFKITVFIYVLQLILPSKVHSSPVPDSDNGLREFPLSIVHINDFHARFEQTDELGGQCKPTAKCVGGYARLVTTVKKLKEEGQNTIFLNAADNYQGTLWYNLGKWNVTAYFMNLLPADAMTLGNHEFDDKIEGIVPFLEVIKTPIVVANIDDSLEPTFKGKYTKSVVLERGGRKIGIVGVIAQNTDNISSPGKLRFLDEIQSVKNESKRLREEEKVDIVIVLSHIGLDHDYDLAEQAGDYIDAIIGGHSHSFLWTGDNPPGKEKVVDAYPVEIVQTSGKKVLIVQASAFARYVGNITLYFGENNNLIRYAGAPVYLDSDVPEVPQIVEEMKAWEEFVHEKGNEIIAESRVVLSRENCRVSDCNIGNFFTDAYVHEYVTSHTGPYWTPVSVGLMNVGGIRASVDRGNITFSQLITMAPFENTVDTFDLSGKHLLEAFEHAVTVPNRLGFNGQNMLQVSGVKLVYDVTKCEGQRVVSAKIRCQKCDIPKYEPLDPEETYRIVTASFLANGGDGFTMIRDNKKNYKVGRKDYDVLINYAKYSSPITIGEEGRIRIIQ</sequence>
<organism>
    <name type="scientific">Tabanus yao</name>
    <name type="common">Horsefly</name>
    <dbReference type="NCBI Taxonomy" id="485572"/>
    <lineage>
        <taxon>Eukaryota</taxon>
        <taxon>Metazoa</taxon>
        <taxon>Ecdysozoa</taxon>
        <taxon>Arthropoda</taxon>
        <taxon>Hexapoda</taxon>
        <taxon>Insecta</taxon>
        <taxon>Pterygota</taxon>
        <taxon>Neoptera</taxon>
        <taxon>Endopterygota</taxon>
        <taxon>Diptera</taxon>
        <taxon>Brachycera</taxon>
        <taxon>Tabanomorpha</taxon>
        <taxon>Tabanoidea</taxon>
        <taxon>Tabanidae</taxon>
        <taxon>Tabanus</taxon>
    </lineage>
</organism>
<keyword id="KW-0020">Allergen</keyword>
<keyword id="KW-0067">ATP-binding</keyword>
<keyword id="KW-0903">Direct protein sequencing</keyword>
<keyword id="KW-1199">Hemostasis impairing toxin</keyword>
<keyword id="KW-0378">Hydrolase</keyword>
<keyword id="KW-0479">Metal-binding</keyword>
<keyword id="KW-0547">Nucleotide-binding</keyword>
<keyword id="KW-1201">Platelet aggregation inhibiting toxin</keyword>
<keyword id="KW-0964">Secreted</keyword>
<keyword id="KW-0732">Signal</keyword>
<keyword id="KW-0800">Toxin</keyword>
<name>APY_TABYA</name>
<accession>B3A0N5</accession>
<protein>
    <recommendedName>
        <fullName evidence="5">Apyrase</fullName>
        <ecNumber evidence="2">3.6.1.5</ecNumber>
    </recommendedName>
    <alternativeName>
        <fullName evidence="2">ATP-diphosphatase</fullName>
        <shortName evidence="2">ADPase</shortName>
    </alternativeName>
    <alternativeName>
        <fullName evidence="2">ATP-diphosphohydrolase</fullName>
    </alternativeName>
    <alternativeName>
        <fullName evidence="2">Adenosine diphosphatase</fullName>
    </alternativeName>
    <allergenName evidence="5">Tab y 1</allergenName>
</protein>
<comment type="function">
    <text evidence="2 4">Facilitates hematophagy by inhibiting ADP-dependent platelet aggregation in the host (PubMed:21848516). Cleaves adenosine triphosphate (ATP) and adenosine diphosphate (ADP) to adenosine monophosphate (AMP) and inorganic phosphate (By similarity). Shows potential for antithrombotic activity (PubMed:21848516). Can induce basophil activation (PubMed:21848516). May reduce probing time by facilitating the speed of locating blood.</text>
</comment>
<comment type="catalytic activity">
    <reaction evidence="2">
        <text>a ribonucleoside 5'-triphosphate + 2 H2O = a ribonucleoside 5'-phosphate + 2 phosphate + 2 H(+)</text>
        <dbReference type="Rhea" id="RHEA:36795"/>
        <dbReference type="ChEBI" id="CHEBI:15377"/>
        <dbReference type="ChEBI" id="CHEBI:15378"/>
        <dbReference type="ChEBI" id="CHEBI:43474"/>
        <dbReference type="ChEBI" id="CHEBI:58043"/>
        <dbReference type="ChEBI" id="CHEBI:61557"/>
        <dbReference type="EC" id="3.6.1.5"/>
    </reaction>
    <physiologicalReaction direction="left-to-right" evidence="6">
        <dbReference type="Rhea" id="RHEA:36796"/>
    </physiologicalReaction>
</comment>
<comment type="cofactor">
    <cofactor evidence="2">
        <name>a divalent metal cation</name>
        <dbReference type="ChEBI" id="CHEBI:60240"/>
    </cofactor>
</comment>
<comment type="subcellular location">
    <subcellularLocation>
        <location evidence="2">Secreted</location>
    </subcellularLocation>
</comment>
<comment type="tissue specificity">
    <text evidence="4">Salivary gland (at protein level).</text>
</comment>
<comment type="allergen">
    <text evidence="4">Causes an allergic reaction in human (PubMed:21848516). Binds to IgE (PubMed:21848516).</text>
</comment>
<comment type="similarity">
    <text evidence="6">Belongs to the 5'-nucleotidase family.</text>
</comment>
<gene>
    <name evidence="6" type="primary">APY</name>
</gene>
<dbReference type="EC" id="3.6.1.5" evidence="2"/>
<dbReference type="SMR" id="B3A0N5"/>
<dbReference type="Allergome" id="9494">
    <property type="allergen name" value="Tab y 1"/>
</dbReference>
<dbReference type="GO" id="GO:0005576">
    <property type="term" value="C:extracellular region"/>
    <property type="evidence" value="ECO:0007669"/>
    <property type="project" value="UniProtKB-SubCell"/>
</dbReference>
<dbReference type="GO" id="GO:0005886">
    <property type="term" value="C:plasma membrane"/>
    <property type="evidence" value="ECO:0007669"/>
    <property type="project" value="TreeGrafter"/>
</dbReference>
<dbReference type="GO" id="GO:0008253">
    <property type="term" value="F:5'-nucleotidase activity"/>
    <property type="evidence" value="ECO:0007669"/>
    <property type="project" value="TreeGrafter"/>
</dbReference>
<dbReference type="GO" id="GO:0004050">
    <property type="term" value="F:apyrase activity"/>
    <property type="evidence" value="ECO:0007669"/>
    <property type="project" value="UniProtKB-EC"/>
</dbReference>
<dbReference type="GO" id="GO:0005524">
    <property type="term" value="F:ATP binding"/>
    <property type="evidence" value="ECO:0007669"/>
    <property type="project" value="UniProtKB-KW"/>
</dbReference>
<dbReference type="GO" id="GO:0046872">
    <property type="term" value="F:metal ion binding"/>
    <property type="evidence" value="ECO:0007669"/>
    <property type="project" value="UniProtKB-KW"/>
</dbReference>
<dbReference type="GO" id="GO:0090729">
    <property type="term" value="F:toxin activity"/>
    <property type="evidence" value="ECO:0007669"/>
    <property type="project" value="UniProtKB-KW"/>
</dbReference>
<dbReference type="GO" id="GO:0006196">
    <property type="term" value="P:AMP catabolic process"/>
    <property type="evidence" value="ECO:0007669"/>
    <property type="project" value="TreeGrafter"/>
</dbReference>
<dbReference type="CDD" id="cd07409">
    <property type="entry name" value="MPP_CD73_N"/>
    <property type="match status" value="1"/>
</dbReference>
<dbReference type="FunFam" id="3.90.780.10:FF:000001">
    <property type="entry name" value="NT5E isoform 3"/>
    <property type="match status" value="1"/>
</dbReference>
<dbReference type="FunFam" id="3.60.21.10:FF:000020">
    <property type="entry name" value="NT5E isoform 4"/>
    <property type="match status" value="1"/>
</dbReference>
<dbReference type="Gene3D" id="3.60.21.10">
    <property type="match status" value="1"/>
</dbReference>
<dbReference type="Gene3D" id="3.90.780.10">
    <property type="entry name" value="5'-Nucleotidase, C-terminal domain"/>
    <property type="match status" value="1"/>
</dbReference>
<dbReference type="InterPro" id="IPR008334">
    <property type="entry name" value="5'-Nucleotdase_C"/>
</dbReference>
<dbReference type="InterPro" id="IPR036907">
    <property type="entry name" value="5'-Nucleotdase_C_sf"/>
</dbReference>
<dbReference type="InterPro" id="IPR006146">
    <property type="entry name" value="5'-Nucleotdase_CS"/>
</dbReference>
<dbReference type="InterPro" id="IPR006179">
    <property type="entry name" value="5_nucleotidase/apyrase"/>
</dbReference>
<dbReference type="InterPro" id="IPR004843">
    <property type="entry name" value="Calcineurin-like_PHP_ApaH"/>
</dbReference>
<dbReference type="InterPro" id="IPR029052">
    <property type="entry name" value="Metallo-depent_PP-like"/>
</dbReference>
<dbReference type="PANTHER" id="PTHR11575">
    <property type="entry name" value="5'-NUCLEOTIDASE-RELATED"/>
    <property type="match status" value="1"/>
</dbReference>
<dbReference type="PANTHER" id="PTHR11575:SF32">
    <property type="entry name" value="APYRASE-LIKE PROTEIN"/>
    <property type="match status" value="1"/>
</dbReference>
<dbReference type="Pfam" id="PF02872">
    <property type="entry name" value="5_nucleotid_C"/>
    <property type="match status" value="1"/>
</dbReference>
<dbReference type="Pfam" id="PF00149">
    <property type="entry name" value="Metallophos"/>
    <property type="match status" value="1"/>
</dbReference>
<dbReference type="PRINTS" id="PR01607">
    <property type="entry name" value="APYRASEFAMLY"/>
</dbReference>
<dbReference type="SUPFAM" id="SSF55816">
    <property type="entry name" value="5'-nucleotidase (syn. UDP-sugar hydrolase), C-terminal domain"/>
    <property type="match status" value="1"/>
</dbReference>
<dbReference type="SUPFAM" id="SSF56300">
    <property type="entry name" value="Metallo-dependent phosphatases"/>
    <property type="match status" value="1"/>
</dbReference>
<dbReference type="PROSITE" id="PS00785">
    <property type="entry name" value="5_NUCLEOTIDASE_1"/>
    <property type="match status" value="1"/>
</dbReference>
<reference evidence="6" key="1">
    <citation type="journal article" date="2011" name="Allergy">
        <title>A novel allergen Tab y 1 with inhibitory activity of platelet aggregation from salivary glands of horseflies.</title>
        <authorList>
            <person name="An S."/>
            <person name="Ma D."/>
            <person name="Wei J.F."/>
            <person name="Yang X."/>
            <person name="Yang H.W."/>
            <person name="Yang H."/>
            <person name="Xu X."/>
            <person name="He S."/>
            <person name="Lai R."/>
        </authorList>
    </citation>
    <scope>NUCLEOTIDE SEQUENCE [MRNA]</scope>
    <scope>PROTEIN SEQUENCE OF 78-104; 143-159; 175-192; 292-308; 431-444 AND 538-549</scope>
    <scope>FUNCTION</scope>
    <scope>TISSUE SPECIFICITY</scope>
    <scope>ALLERGEN</scope>
    <source>
        <tissue evidence="4">Salivary gland</tissue>
    </source>
</reference>
<proteinExistence type="evidence at protein level"/>